<name>XERD_SHEON</name>
<dbReference type="EMBL" id="AE014299">
    <property type="protein sequence ID" value="AAN54024.1"/>
    <property type="molecule type" value="Genomic_DNA"/>
</dbReference>
<dbReference type="RefSeq" id="NP_716579.1">
    <property type="nucleotide sequence ID" value="NC_004347.2"/>
</dbReference>
<dbReference type="RefSeq" id="WP_011071230.1">
    <property type="nucleotide sequence ID" value="NC_004347.2"/>
</dbReference>
<dbReference type="SMR" id="Q7ZAJ8"/>
<dbReference type="STRING" id="211586.SO_0950"/>
<dbReference type="PaxDb" id="211586-SO_0950"/>
<dbReference type="KEGG" id="son:SO_0950"/>
<dbReference type="PATRIC" id="fig|211586.12.peg.913"/>
<dbReference type="eggNOG" id="COG4974">
    <property type="taxonomic scope" value="Bacteria"/>
</dbReference>
<dbReference type="HOGENOM" id="CLU_027562_9_0_6"/>
<dbReference type="OrthoDB" id="9801717at2"/>
<dbReference type="PhylomeDB" id="Q7ZAJ8"/>
<dbReference type="BioCyc" id="SONE211586:G1GMP-887-MONOMER"/>
<dbReference type="Proteomes" id="UP000008186">
    <property type="component" value="Chromosome"/>
</dbReference>
<dbReference type="GO" id="GO:0005737">
    <property type="term" value="C:cytoplasm"/>
    <property type="evidence" value="ECO:0007669"/>
    <property type="project" value="UniProtKB-SubCell"/>
</dbReference>
<dbReference type="GO" id="GO:0048476">
    <property type="term" value="C:Holliday junction resolvase complex"/>
    <property type="evidence" value="ECO:0000318"/>
    <property type="project" value="GO_Central"/>
</dbReference>
<dbReference type="GO" id="GO:0003677">
    <property type="term" value="F:DNA binding"/>
    <property type="evidence" value="ECO:0000318"/>
    <property type="project" value="GO_Central"/>
</dbReference>
<dbReference type="GO" id="GO:0009037">
    <property type="term" value="F:tyrosine-based site-specific recombinase activity"/>
    <property type="evidence" value="ECO:0000318"/>
    <property type="project" value="GO_Central"/>
</dbReference>
<dbReference type="GO" id="GO:0051301">
    <property type="term" value="P:cell division"/>
    <property type="evidence" value="ECO:0007669"/>
    <property type="project" value="UniProtKB-KW"/>
</dbReference>
<dbReference type="GO" id="GO:0007059">
    <property type="term" value="P:chromosome segregation"/>
    <property type="evidence" value="ECO:0000318"/>
    <property type="project" value="GO_Central"/>
</dbReference>
<dbReference type="GO" id="GO:0006310">
    <property type="term" value="P:DNA recombination"/>
    <property type="evidence" value="ECO:0000318"/>
    <property type="project" value="GO_Central"/>
</dbReference>
<dbReference type="GO" id="GO:0006313">
    <property type="term" value="P:DNA transposition"/>
    <property type="evidence" value="ECO:0007669"/>
    <property type="project" value="UniProtKB-UniRule"/>
</dbReference>
<dbReference type="GO" id="GO:0071139">
    <property type="term" value="P:resolution of DNA recombination intermediates"/>
    <property type="evidence" value="ECO:0000318"/>
    <property type="project" value="GO_Central"/>
</dbReference>
<dbReference type="CDD" id="cd00798">
    <property type="entry name" value="INT_XerDC_C"/>
    <property type="match status" value="1"/>
</dbReference>
<dbReference type="Gene3D" id="1.10.150.130">
    <property type="match status" value="1"/>
</dbReference>
<dbReference type="Gene3D" id="1.10.443.10">
    <property type="entry name" value="Intergrase catalytic core"/>
    <property type="match status" value="1"/>
</dbReference>
<dbReference type="HAMAP" id="MF_01808">
    <property type="entry name" value="Recomb_XerC_XerD"/>
    <property type="match status" value="1"/>
</dbReference>
<dbReference type="HAMAP" id="MF_01807">
    <property type="entry name" value="Recomb_XerD"/>
    <property type="match status" value="1"/>
</dbReference>
<dbReference type="InterPro" id="IPR044068">
    <property type="entry name" value="CB"/>
</dbReference>
<dbReference type="InterPro" id="IPR011010">
    <property type="entry name" value="DNA_brk_join_enz"/>
</dbReference>
<dbReference type="InterPro" id="IPR013762">
    <property type="entry name" value="Integrase-like_cat_sf"/>
</dbReference>
<dbReference type="InterPro" id="IPR002104">
    <property type="entry name" value="Integrase_catalytic"/>
</dbReference>
<dbReference type="InterPro" id="IPR010998">
    <property type="entry name" value="Integrase_recombinase_N"/>
</dbReference>
<dbReference type="InterPro" id="IPR004107">
    <property type="entry name" value="Integrase_SAM-like_N"/>
</dbReference>
<dbReference type="InterPro" id="IPR011932">
    <property type="entry name" value="Recomb_XerD"/>
</dbReference>
<dbReference type="InterPro" id="IPR023009">
    <property type="entry name" value="Tyrosine_recombinase_XerC/XerD"/>
</dbReference>
<dbReference type="InterPro" id="IPR050090">
    <property type="entry name" value="Tyrosine_recombinase_XerCD"/>
</dbReference>
<dbReference type="NCBIfam" id="NF001399">
    <property type="entry name" value="PRK00283.1"/>
    <property type="match status" value="1"/>
</dbReference>
<dbReference type="NCBIfam" id="NF040815">
    <property type="entry name" value="recomb_XerA_Arch"/>
    <property type="match status" value="1"/>
</dbReference>
<dbReference type="NCBIfam" id="TIGR02225">
    <property type="entry name" value="recomb_XerD"/>
    <property type="match status" value="1"/>
</dbReference>
<dbReference type="PANTHER" id="PTHR30349">
    <property type="entry name" value="PHAGE INTEGRASE-RELATED"/>
    <property type="match status" value="1"/>
</dbReference>
<dbReference type="PANTHER" id="PTHR30349:SF90">
    <property type="entry name" value="TYROSINE RECOMBINASE XERD"/>
    <property type="match status" value="1"/>
</dbReference>
<dbReference type="Pfam" id="PF02899">
    <property type="entry name" value="Phage_int_SAM_1"/>
    <property type="match status" value="1"/>
</dbReference>
<dbReference type="Pfam" id="PF00589">
    <property type="entry name" value="Phage_integrase"/>
    <property type="match status" value="1"/>
</dbReference>
<dbReference type="SUPFAM" id="SSF56349">
    <property type="entry name" value="DNA breaking-rejoining enzymes"/>
    <property type="match status" value="1"/>
</dbReference>
<dbReference type="PROSITE" id="PS51900">
    <property type="entry name" value="CB"/>
    <property type="match status" value="1"/>
</dbReference>
<dbReference type="PROSITE" id="PS51898">
    <property type="entry name" value="TYR_RECOMBINASE"/>
    <property type="match status" value="1"/>
</dbReference>
<feature type="chain" id="PRO_0000095414" description="Tyrosine recombinase XerD">
    <location>
        <begin position="1"/>
        <end position="300"/>
    </location>
</feature>
<feature type="domain" description="Core-binding (CB)" evidence="3">
    <location>
        <begin position="5"/>
        <end position="90"/>
    </location>
</feature>
<feature type="domain" description="Tyr recombinase" evidence="2">
    <location>
        <begin position="111"/>
        <end position="294"/>
    </location>
</feature>
<feature type="active site" evidence="1">
    <location>
        <position position="151"/>
    </location>
</feature>
<feature type="active site" evidence="1">
    <location>
        <position position="175"/>
    </location>
</feature>
<feature type="active site" evidence="1">
    <location>
        <position position="246"/>
    </location>
</feature>
<feature type="active site" evidence="1">
    <location>
        <position position="249"/>
    </location>
</feature>
<feature type="active site" evidence="1">
    <location>
        <position position="272"/>
    </location>
</feature>
<feature type="active site" description="O-(3'-phospho-DNA)-tyrosine intermediate" evidence="1">
    <location>
        <position position="281"/>
    </location>
</feature>
<accession>Q7ZAJ8</accession>
<reference key="1">
    <citation type="journal article" date="2002" name="Nat. Biotechnol.">
        <title>Genome sequence of the dissimilatory metal ion-reducing bacterium Shewanella oneidensis.</title>
        <authorList>
            <person name="Heidelberg J.F."/>
            <person name="Paulsen I.T."/>
            <person name="Nelson K.E."/>
            <person name="Gaidos E.J."/>
            <person name="Nelson W.C."/>
            <person name="Read T.D."/>
            <person name="Eisen J.A."/>
            <person name="Seshadri R."/>
            <person name="Ward N.L."/>
            <person name="Methe B.A."/>
            <person name="Clayton R.A."/>
            <person name="Meyer T."/>
            <person name="Tsapin A."/>
            <person name="Scott J."/>
            <person name="Beanan M.J."/>
            <person name="Brinkac L.M."/>
            <person name="Daugherty S.C."/>
            <person name="DeBoy R.T."/>
            <person name="Dodson R.J."/>
            <person name="Durkin A.S."/>
            <person name="Haft D.H."/>
            <person name="Kolonay J.F."/>
            <person name="Madupu R."/>
            <person name="Peterson J.D."/>
            <person name="Umayam L.A."/>
            <person name="White O."/>
            <person name="Wolf A.M."/>
            <person name="Vamathevan J.J."/>
            <person name="Weidman J.F."/>
            <person name="Impraim M."/>
            <person name="Lee K."/>
            <person name="Berry K.J."/>
            <person name="Lee C."/>
            <person name="Mueller J."/>
            <person name="Khouri H.M."/>
            <person name="Gill J."/>
            <person name="Utterback T.R."/>
            <person name="McDonald L.A."/>
            <person name="Feldblyum T.V."/>
            <person name="Smith H.O."/>
            <person name="Venter J.C."/>
            <person name="Nealson K.H."/>
            <person name="Fraser C.M."/>
        </authorList>
    </citation>
    <scope>NUCLEOTIDE SEQUENCE [LARGE SCALE GENOMIC DNA]</scope>
    <source>
        <strain>ATCC 700550 / JCM 31522 / CIP 106686 / LMG 19005 / NCIMB 14063 / MR-1</strain>
    </source>
</reference>
<protein>
    <recommendedName>
        <fullName evidence="1">Tyrosine recombinase XerD</fullName>
    </recommendedName>
</protein>
<keyword id="KW-0131">Cell cycle</keyword>
<keyword id="KW-0132">Cell division</keyword>
<keyword id="KW-0159">Chromosome partition</keyword>
<keyword id="KW-0963">Cytoplasm</keyword>
<keyword id="KW-0229">DNA integration</keyword>
<keyword id="KW-0233">DNA recombination</keyword>
<keyword id="KW-0238">DNA-binding</keyword>
<keyword id="KW-1185">Reference proteome</keyword>
<organism>
    <name type="scientific">Shewanella oneidensis (strain ATCC 700550 / JCM 31522 / CIP 106686 / LMG 19005 / NCIMB 14063 / MR-1)</name>
    <dbReference type="NCBI Taxonomy" id="211586"/>
    <lineage>
        <taxon>Bacteria</taxon>
        <taxon>Pseudomonadati</taxon>
        <taxon>Pseudomonadota</taxon>
        <taxon>Gammaproteobacteria</taxon>
        <taxon>Alteromonadales</taxon>
        <taxon>Shewanellaceae</taxon>
        <taxon>Shewanella</taxon>
    </lineage>
</organism>
<comment type="function">
    <text evidence="1">Site-specific tyrosine recombinase, which acts by catalyzing the cutting and rejoining of the recombining DNA molecules. The XerC-XerD complex is essential to convert dimers of the bacterial chromosome into monomers to permit their segregation at cell division. It also contributes to the segregational stability of plasmids.</text>
</comment>
<comment type="subunit">
    <text evidence="1">Forms a cyclic heterotetrameric complex composed of two molecules of XerC and two molecules of XerD.</text>
</comment>
<comment type="subcellular location">
    <subcellularLocation>
        <location evidence="1">Cytoplasm</location>
    </subcellularLocation>
</comment>
<comment type="similarity">
    <text evidence="1">Belongs to the 'phage' integrase family. XerD subfamily.</text>
</comment>
<evidence type="ECO:0000255" key="1">
    <source>
        <dbReference type="HAMAP-Rule" id="MF_01807"/>
    </source>
</evidence>
<evidence type="ECO:0000255" key="2">
    <source>
        <dbReference type="PROSITE-ProRule" id="PRU01246"/>
    </source>
</evidence>
<evidence type="ECO:0000255" key="3">
    <source>
        <dbReference type="PROSITE-ProRule" id="PRU01248"/>
    </source>
</evidence>
<sequence>MAKTYQCDPLIDAFLDDLWSSKGLSDNTLSAYRTDLRHFDRYLQSQGLRLRDVGQADVRAYLAYRVEQQFARTSSARLLSSLRRFYNYLLQTKQISGDPMAQIESPKLSRHLPDSLSESQVDRLLAEPNVDDPVECRDKAMLELLYATGLRVSELVGLTMEQMSLRQGLVRIIGKGGKERLVPMGEMAITEVEHYLTSARHELLGHIQSDVVFPSKRSQMMTRQTFWHRIKLYASRAGIETELSPHTLRHAFATHLLNHGADLRVVQLLLGHSDLSTTQIYTHVARARLQELHQQHHPRG</sequence>
<proteinExistence type="inferred from homology"/>
<gene>
    <name evidence="1" type="primary">xerD</name>
    <name type="ordered locus">SO_0950</name>
</gene>